<reference key="1">
    <citation type="journal article" date="1998" name="Nature">
        <title>The complete genome of the hyperthermophilic bacterium Aquifex aeolicus.</title>
        <authorList>
            <person name="Deckert G."/>
            <person name="Warren P.V."/>
            <person name="Gaasterland T."/>
            <person name="Young W.G."/>
            <person name="Lenox A.L."/>
            <person name="Graham D.E."/>
            <person name="Overbeek R."/>
            <person name="Snead M.A."/>
            <person name="Keller M."/>
            <person name="Aujay M."/>
            <person name="Huber R."/>
            <person name="Feldman R.A."/>
            <person name="Short J.M."/>
            <person name="Olsen G.J."/>
            <person name="Swanson R.V."/>
        </authorList>
    </citation>
    <scope>NUCLEOTIDE SEQUENCE [LARGE SCALE GENOMIC DNA]</scope>
    <source>
        <strain>VF5</strain>
    </source>
</reference>
<reference key="2">
    <citation type="journal article" date="2002" name="J. Biol. Chem.">
        <title>Cysteine activation is an inherent in vitro property of prolyl-tRNA synthetases.</title>
        <authorList>
            <person name="Ahel I."/>
            <person name="Stathopoulos C."/>
            <person name="Ambrogelly A."/>
            <person name="Sauerwald A."/>
            <person name="Toogood H."/>
            <person name="Hartsch T."/>
            <person name="Soell D."/>
        </authorList>
    </citation>
    <scope>PROLINE AND CYSTEINE ACTIVATION</scope>
    <scope>POSTTRANSFER EDITING ACTIVITY</scope>
    <scope>KINETIC PARAMETERS</scope>
</reference>
<dbReference type="EC" id="6.1.1.15"/>
<dbReference type="EMBL" id="AE000657">
    <property type="protein sequence ID" value="AAC06648.1"/>
    <property type="molecule type" value="Genomic_DNA"/>
</dbReference>
<dbReference type="PIR" id="F70332">
    <property type="entry name" value="F70332"/>
</dbReference>
<dbReference type="RefSeq" id="NP_213250.1">
    <property type="nucleotide sequence ID" value="NC_000918.1"/>
</dbReference>
<dbReference type="RefSeq" id="WP_010880188.1">
    <property type="nucleotide sequence ID" value="NC_000918.1"/>
</dbReference>
<dbReference type="SMR" id="O66690"/>
<dbReference type="FunCoup" id="O66690">
    <property type="interactions" value="448"/>
</dbReference>
<dbReference type="STRING" id="224324.aq_365"/>
<dbReference type="EnsemblBacteria" id="AAC06648">
    <property type="protein sequence ID" value="AAC06648"/>
    <property type="gene ID" value="aq_365"/>
</dbReference>
<dbReference type="KEGG" id="aae:aq_365"/>
<dbReference type="PATRIC" id="fig|224324.8.peg.295"/>
<dbReference type="eggNOG" id="COG0442">
    <property type="taxonomic scope" value="Bacteria"/>
</dbReference>
<dbReference type="HOGENOM" id="CLU_016739_0_0_0"/>
<dbReference type="InParanoid" id="O66690"/>
<dbReference type="OrthoDB" id="9809052at2"/>
<dbReference type="SABIO-RK" id="O66690"/>
<dbReference type="Proteomes" id="UP000000798">
    <property type="component" value="Chromosome"/>
</dbReference>
<dbReference type="GO" id="GO:0005829">
    <property type="term" value="C:cytosol"/>
    <property type="evidence" value="ECO:0000318"/>
    <property type="project" value="GO_Central"/>
</dbReference>
<dbReference type="GO" id="GO:0002161">
    <property type="term" value="F:aminoacyl-tRNA deacylase activity"/>
    <property type="evidence" value="ECO:0007669"/>
    <property type="project" value="InterPro"/>
</dbReference>
<dbReference type="GO" id="GO:0005524">
    <property type="term" value="F:ATP binding"/>
    <property type="evidence" value="ECO:0007669"/>
    <property type="project" value="UniProtKB-UniRule"/>
</dbReference>
<dbReference type="GO" id="GO:0004827">
    <property type="term" value="F:proline-tRNA ligase activity"/>
    <property type="evidence" value="ECO:0000318"/>
    <property type="project" value="GO_Central"/>
</dbReference>
<dbReference type="GO" id="GO:0006433">
    <property type="term" value="P:prolyl-tRNA aminoacylation"/>
    <property type="evidence" value="ECO:0000318"/>
    <property type="project" value="GO_Central"/>
</dbReference>
<dbReference type="CDD" id="cd04334">
    <property type="entry name" value="ProRS-INS"/>
    <property type="match status" value="1"/>
</dbReference>
<dbReference type="CDD" id="cd00861">
    <property type="entry name" value="ProRS_anticodon_short"/>
    <property type="match status" value="1"/>
</dbReference>
<dbReference type="CDD" id="cd00779">
    <property type="entry name" value="ProRS_core_prok"/>
    <property type="match status" value="1"/>
</dbReference>
<dbReference type="FunFam" id="3.30.930.10:FF:000065">
    <property type="entry name" value="Proline--tRNA ligase"/>
    <property type="match status" value="1"/>
</dbReference>
<dbReference type="FunFam" id="3.30.930.10:FF:000066">
    <property type="entry name" value="Proline--tRNA ligase"/>
    <property type="match status" value="1"/>
</dbReference>
<dbReference type="FunFam" id="3.40.50.800:FF:000011">
    <property type="entry name" value="Proline--tRNA ligase"/>
    <property type="match status" value="1"/>
</dbReference>
<dbReference type="Gene3D" id="3.40.50.800">
    <property type="entry name" value="Anticodon-binding domain"/>
    <property type="match status" value="1"/>
</dbReference>
<dbReference type="Gene3D" id="3.30.930.10">
    <property type="entry name" value="Bira Bifunctional Protein, Domain 2"/>
    <property type="match status" value="2"/>
</dbReference>
<dbReference type="HAMAP" id="MF_01569">
    <property type="entry name" value="Pro_tRNA_synth_type1"/>
    <property type="match status" value="1"/>
</dbReference>
<dbReference type="InterPro" id="IPR002314">
    <property type="entry name" value="aa-tRNA-synt_IIb"/>
</dbReference>
<dbReference type="InterPro" id="IPR006195">
    <property type="entry name" value="aa-tRNA-synth_II"/>
</dbReference>
<dbReference type="InterPro" id="IPR045864">
    <property type="entry name" value="aa-tRNA-synth_II/BPL/LPL"/>
</dbReference>
<dbReference type="InterPro" id="IPR004154">
    <property type="entry name" value="Anticodon-bd"/>
</dbReference>
<dbReference type="InterPro" id="IPR036621">
    <property type="entry name" value="Anticodon-bd_dom_sf"/>
</dbReference>
<dbReference type="InterPro" id="IPR002316">
    <property type="entry name" value="Pro-tRNA-ligase_IIa"/>
</dbReference>
<dbReference type="InterPro" id="IPR004500">
    <property type="entry name" value="Pro-tRNA-synth_IIa_bac-type"/>
</dbReference>
<dbReference type="InterPro" id="IPR023717">
    <property type="entry name" value="Pro-tRNA-Synthase_IIa_type1"/>
</dbReference>
<dbReference type="InterPro" id="IPR050062">
    <property type="entry name" value="Pro-tRNA_synthetase"/>
</dbReference>
<dbReference type="InterPro" id="IPR044140">
    <property type="entry name" value="ProRS_anticodon_short"/>
</dbReference>
<dbReference type="InterPro" id="IPR033730">
    <property type="entry name" value="ProRS_core_prok"/>
</dbReference>
<dbReference type="InterPro" id="IPR036754">
    <property type="entry name" value="YbaK/aa-tRNA-synt-asso_dom_sf"/>
</dbReference>
<dbReference type="InterPro" id="IPR007214">
    <property type="entry name" value="YbaK/aa-tRNA-synth-assoc-dom"/>
</dbReference>
<dbReference type="NCBIfam" id="NF006625">
    <property type="entry name" value="PRK09194.1"/>
    <property type="match status" value="1"/>
</dbReference>
<dbReference type="NCBIfam" id="TIGR00409">
    <property type="entry name" value="proS_fam_II"/>
    <property type="match status" value="1"/>
</dbReference>
<dbReference type="PANTHER" id="PTHR42753">
    <property type="entry name" value="MITOCHONDRIAL RIBOSOME PROTEIN L39/PROLYL-TRNA LIGASE FAMILY MEMBER"/>
    <property type="match status" value="1"/>
</dbReference>
<dbReference type="PANTHER" id="PTHR42753:SF2">
    <property type="entry name" value="PROLINE--TRNA LIGASE"/>
    <property type="match status" value="1"/>
</dbReference>
<dbReference type="Pfam" id="PF03129">
    <property type="entry name" value="HGTP_anticodon"/>
    <property type="match status" value="1"/>
</dbReference>
<dbReference type="Pfam" id="PF00587">
    <property type="entry name" value="tRNA-synt_2b"/>
    <property type="match status" value="1"/>
</dbReference>
<dbReference type="Pfam" id="PF04073">
    <property type="entry name" value="tRNA_edit"/>
    <property type="match status" value="1"/>
</dbReference>
<dbReference type="PRINTS" id="PR01046">
    <property type="entry name" value="TRNASYNTHPRO"/>
</dbReference>
<dbReference type="SUPFAM" id="SSF52954">
    <property type="entry name" value="Class II aaRS ABD-related"/>
    <property type="match status" value="1"/>
</dbReference>
<dbReference type="SUPFAM" id="SSF55681">
    <property type="entry name" value="Class II aaRS and biotin synthetases"/>
    <property type="match status" value="1"/>
</dbReference>
<dbReference type="SUPFAM" id="SSF55826">
    <property type="entry name" value="YbaK/ProRS associated domain"/>
    <property type="match status" value="1"/>
</dbReference>
<dbReference type="PROSITE" id="PS50862">
    <property type="entry name" value="AA_TRNA_LIGASE_II"/>
    <property type="match status" value="1"/>
</dbReference>
<evidence type="ECO:0000250" key="1"/>
<evidence type="ECO:0000269" key="2">
    <source>
    </source>
</evidence>
<evidence type="ECO:0000305" key="3"/>
<feature type="chain" id="PRO_0000248226" description="Proline--tRNA ligase">
    <location>
        <begin position="1"/>
        <end position="570"/>
    </location>
</feature>
<name>SYP_AQUAE</name>
<protein>
    <recommendedName>
        <fullName>Proline--tRNA ligase</fullName>
        <ecNumber>6.1.1.15</ecNumber>
    </recommendedName>
    <alternativeName>
        <fullName>Prolyl-tRNA synthetase</fullName>
        <shortName>ProRS</shortName>
    </alternativeName>
</protein>
<keyword id="KW-0030">Aminoacyl-tRNA synthetase</keyword>
<keyword id="KW-0067">ATP-binding</keyword>
<keyword id="KW-0963">Cytoplasm</keyword>
<keyword id="KW-0436">Ligase</keyword>
<keyword id="KW-0547">Nucleotide-binding</keyword>
<keyword id="KW-0648">Protein biosynthesis</keyword>
<keyword id="KW-1185">Reference proteome</keyword>
<gene>
    <name type="primary">proS</name>
    <name type="ordered locus">aq_365</name>
</gene>
<sequence>MRWSRYFLYTEKEEPKEAEAPSHRLLLKAGFIKQVSAGIYELLPPAYKVLKKVESIIRKEMDRSGAQELLLTVLNPKELWEETGRWETYGEELFKLKDRNGREYCLGPTHEEEITDLVRRVVRSYRQLPVILYQIQVKFRDEKRPRFGLIRAREFIMKDAYSFDTDDMSAMISYEAMKFAYQRIFNKLRLNVIMAEADVGQIGGKMSHEFIAFTDYGEAKVAYCENCGYAANAEIVPLPKPEEEKEEEKPMEKVHTPNVHTIEELSKFLDVHPSKIMKAVLYIVNEKEPVLVLIRGDREIDENKLEKVLGTDNFRLATDEEVQELLGTKKGFIGIFNLPENIKVLWDNSLYGVKNLVVALNEPDWHYINVNPGRDFQYGEFVDVAEVREGDPCPKCGSPLKVRRGLELGHIFLLGTRYSEPMKAYFTDRDGKEKPIIMGCYGIGVSRILAALVEQYHDDKGIKWPTPVAPFELDIILLNTKDEEMKNVAEKLYLEAEEKGIDVIFDDREESPGFKFADADLVGFPYRIVVGKKVKEGKVEVQSRHTGEKWDVEIEKAIDFVKEKIEEDKK</sequence>
<accession>O66690</accession>
<organism>
    <name type="scientific">Aquifex aeolicus (strain VF5)</name>
    <dbReference type="NCBI Taxonomy" id="224324"/>
    <lineage>
        <taxon>Bacteria</taxon>
        <taxon>Pseudomonadati</taxon>
        <taxon>Aquificota</taxon>
        <taxon>Aquificia</taxon>
        <taxon>Aquificales</taxon>
        <taxon>Aquificaceae</taxon>
        <taxon>Aquifex</taxon>
    </lineage>
</organism>
<comment type="function">
    <text>Catalyzes the attachment of proline to tRNA(Pro) in a two-step reaction: proline is first activated by ATP to form Pro-AMP and then transferred to the acceptor end of tRNA(Pro). As ProRS can inadvertently accommodate and process non-cognate amino acids such as alanine and cysteine, to avoid such errors it has two additional distinct editing activities against alanine. One activity is designated as 'pretransfer' editing and involves the tRNA(Pro)-independent hydrolysis of activated Ala-AMP. The other activity is designated 'posttransfer' editing and involves deacylation of mischarged Ala-tRNA(Pro). The misacylated Cys-tRNA(Pro) is not edited by ProRS.</text>
</comment>
<comment type="catalytic activity">
    <reaction>
        <text>tRNA(Pro) + L-proline + ATP = L-prolyl-tRNA(Pro) + AMP + diphosphate</text>
        <dbReference type="Rhea" id="RHEA:14305"/>
        <dbReference type="Rhea" id="RHEA-COMP:9700"/>
        <dbReference type="Rhea" id="RHEA-COMP:9702"/>
        <dbReference type="ChEBI" id="CHEBI:30616"/>
        <dbReference type="ChEBI" id="CHEBI:33019"/>
        <dbReference type="ChEBI" id="CHEBI:60039"/>
        <dbReference type="ChEBI" id="CHEBI:78442"/>
        <dbReference type="ChEBI" id="CHEBI:78532"/>
        <dbReference type="ChEBI" id="CHEBI:456215"/>
        <dbReference type="EC" id="6.1.1.15"/>
    </reaction>
</comment>
<comment type="biophysicochemical properties">
    <kinetics>
        <KM evidence="2">0.06 mM for proline (at 60 degrees Celsius)</KM>
        <KM evidence="2">0.05 mM for cysteine (at 60 degrees Celsius)</KM>
    </kinetics>
</comment>
<comment type="subunit">
    <text evidence="1">Homodimer.</text>
</comment>
<comment type="subcellular location">
    <subcellularLocation>
        <location>Cytoplasm</location>
    </subcellularLocation>
</comment>
<comment type="domain">
    <text evidence="1">Consists of three domains: the N-terminal catalytic domain, the editing domain and the C-terminal anticodon-binding domain.</text>
</comment>
<comment type="similarity">
    <text evidence="3">Belongs to the class-II aminoacyl-tRNA synthetase family. ProS type 1 subfamily.</text>
</comment>
<proteinExistence type="evidence at protein level"/>